<comment type="function">
    <text evidence="1">Channel that opens in response to stretch forces in the membrane lipid bilayer. May participate in the regulation of osmotic pressure changes within the cell.</text>
</comment>
<comment type="subunit">
    <text evidence="1">Homopentamer.</text>
</comment>
<comment type="subcellular location">
    <subcellularLocation>
        <location evidence="1">Cell inner membrane</location>
        <topology evidence="1">Multi-pass membrane protein</topology>
    </subcellularLocation>
</comment>
<comment type="similarity">
    <text evidence="1">Belongs to the MscL family.</text>
</comment>
<feature type="chain" id="PRO_1000094889" description="Large-conductance mechanosensitive channel">
    <location>
        <begin position="1"/>
        <end position="133"/>
    </location>
</feature>
<feature type="transmembrane region" description="Helical" evidence="1">
    <location>
        <begin position="10"/>
        <end position="30"/>
    </location>
</feature>
<feature type="transmembrane region" description="Helical" evidence="1">
    <location>
        <begin position="76"/>
        <end position="96"/>
    </location>
</feature>
<protein>
    <recommendedName>
        <fullName evidence="1">Large-conductance mechanosensitive channel</fullName>
    </recommendedName>
</protein>
<dbReference type="EMBL" id="CP001101">
    <property type="protein sequence ID" value="ACE04668.1"/>
    <property type="molecule type" value="Genomic_DNA"/>
</dbReference>
<dbReference type="SMR" id="B3EL80"/>
<dbReference type="STRING" id="331678.Cphamn1_1750"/>
<dbReference type="KEGG" id="cpb:Cphamn1_1750"/>
<dbReference type="eggNOG" id="COG1970">
    <property type="taxonomic scope" value="Bacteria"/>
</dbReference>
<dbReference type="HOGENOM" id="CLU_095787_0_0_10"/>
<dbReference type="OrthoDB" id="9810350at2"/>
<dbReference type="GO" id="GO:0005886">
    <property type="term" value="C:plasma membrane"/>
    <property type="evidence" value="ECO:0007669"/>
    <property type="project" value="UniProtKB-SubCell"/>
</dbReference>
<dbReference type="GO" id="GO:0008381">
    <property type="term" value="F:mechanosensitive monoatomic ion channel activity"/>
    <property type="evidence" value="ECO:0007669"/>
    <property type="project" value="UniProtKB-UniRule"/>
</dbReference>
<dbReference type="FunFam" id="1.10.1200.120:FF:000001">
    <property type="entry name" value="Large-conductance mechanosensitive channel"/>
    <property type="match status" value="1"/>
</dbReference>
<dbReference type="Gene3D" id="1.10.1200.120">
    <property type="entry name" value="Large-conductance mechanosensitive channel, MscL, domain 1"/>
    <property type="match status" value="1"/>
</dbReference>
<dbReference type="HAMAP" id="MF_00115">
    <property type="entry name" value="MscL"/>
    <property type="match status" value="1"/>
</dbReference>
<dbReference type="InterPro" id="IPR019823">
    <property type="entry name" value="Mechanosensitive_channel_CS"/>
</dbReference>
<dbReference type="InterPro" id="IPR001185">
    <property type="entry name" value="MS_channel"/>
</dbReference>
<dbReference type="InterPro" id="IPR037673">
    <property type="entry name" value="MSC/AndL"/>
</dbReference>
<dbReference type="InterPro" id="IPR036019">
    <property type="entry name" value="MscL_channel"/>
</dbReference>
<dbReference type="NCBIfam" id="TIGR00220">
    <property type="entry name" value="mscL"/>
    <property type="match status" value="1"/>
</dbReference>
<dbReference type="NCBIfam" id="NF001843">
    <property type="entry name" value="PRK00567.1-4"/>
    <property type="match status" value="1"/>
</dbReference>
<dbReference type="PANTHER" id="PTHR30266:SF2">
    <property type="entry name" value="LARGE-CONDUCTANCE MECHANOSENSITIVE CHANNEL"/>
    <property type="match status" value="1"/>
</dbReference>
<dbReference type="PANTHER" id="PTHR30266">
    <property type="entry name" value="MECHANOSENSITIVE CHANNEL MSCL"/>
    <property type="match status" value="1"/>
</dbReference>
<dbReference type="Pfam" id="PF01741">
    <property type="entry name" value="MscL"/>
    <property type="match status" value="1"/>
</dbReference>
<dbReference type="PRINTS" id="PR01264">
    <property type="entry name" value="MECHCHANNEL"/>
</dbReference>
<dbReference type="SUPFAM" id="SSF81330">
    <property type="entry name" value="Gated mechanosensitive channel"/>
    <property type="match status" value="1"/>
</dbReference>
<dbReference type="PROSITE" id="PS01327">
    <property type="entry name" value="MSCL"/>
    <property type="match status" value="1"/>
</dbReference>
<name>MSCL_CHLPB</name>
<sequence length="133" mass="14349">MGVMKEFKEFAVKGNVVDMAVGIVIGAAFGKIVTAFVDGVLMPPIGLMLGGVNFNELALILQEATGEAEAVMINYGIFVQTLVDFIIIAFAIFLVVRGINSLKRKEEAPKTPPGPSKEELLLGEIRDLLKQRS</sequence>
<proteinExistence type="inferred from homology"/>
<gene>
    <name evidence="1" type="primary">mscL</name>
    <name type="ordered locus">Cphamn1_1750</name>
</gene>
<reference key="1">
    <citation type="submission" date="2008-06" db="EMBL/GenBank/DDBJ databases">
        <title>Complete sequence of Chlorobium phaeobacteroides BS1.</title>
        <authorList>
            <consortium name="US DOE Joint Genome Institute"/>
            <person name="Lucas S."/>
            <person name="Copeland A."/>
            <person name="Lapidus A."/>
            <person name="Glavina del Rio T."/>
            <person name="Dalin E."/>
            <person name="Tice H."/>
            <person name="Bruce D."/>
            <person name="Goodwin L."/>
            <person name="Pitluck S."/>
            <person name="Schmutz J."/>
            <person name="Larimer F."/>
            <person name="Land M."/>
            <person name="Hauser L."/>
            <person name="Kyrpides N."/>
            <person name="Ovchinnikova G."/>
            <person name="Li T."/>
            <person name="Liu Z."/>
            <person name="Zhao F."/>
            <person name="Overmann J."/>
            <person name="Bryant D.A."/>
            <person name="Richardson P."/>
        </authorList>
    </citation>
    <scope>NUCLEOTIDE SEQUENCE [LARGE SCALE GENOMIC DNA]</scope>
    <source>
        <strain>BS1</strain>
    </source>
</reference>
<accession>B3EL80</accession>
<keyword id="KW-0997">Cell inner membrane</keyword>
<keyword id="KW-1003">Cell membrane</keyword>
<keyword id="KW-0407">Ion channel</keyword>
<keyword id="KW-0406">Ion transport</keyword>
<keyword id="KW-0472">Membrane</keyword>
<keyword id="KW-0812">Transmembrane</keyword>
<keyword id="KW-1133">Transmembrane helix</keyword>
<keyword id="KW-0813">Transport</keyword>
<organism>
    <name type="scientific">Chlorobium phaeobacteroides (strain BS1)</name>
    <dbReference type="NCBI Taxonomy" id="331678"/>
    <lineage>
        <taxon>Bacteria</taxon>
        <taxon>Pseudomonadati</taxon>
        <taxon>Chlorobiota</taxon>
        <taxon>Chlorobiia</taxon>
        <taxon>Chlorobiales</taxon>
        <taxon>Chlorobiaceae</taxon>
        <taxon>Chlorobium/Pelodictyon group</taxon>
        <taxon>Chlorobium</taxon>
    </lineage>
</organism>
<evidence type="ECO:0000255" key="1">
    <source>
        <dbReference type="HAMAP-Rule" id="MF_00115"/>
    </source>
</evidence>